<gene>
    <name type="primary">yjaZ</name>
    <name type="ordered locus">BSU11350</name>
</gene>
<feature type="chain" id="PRO_0000369422" description="Uncharacterized protein YjaZ">
    <location>
        <begin position="1"/>
        <end position="261"/>
    </location>
</feature>
<name>YJAZ_BACSU</name>
<accession>O31596</accession>
<keyword id="KW-1185">Reference proteome</keyword>
<organism>
    <name type="scientific">Bacillus subtilis (strain 168)</name>
    <dbReference type="NCBI Taxonomy" id="224308"/>
    <lineage>
        <taxon>Bacteria</taxon>
        <taxon>Bacillati</taxon>
        <taxon>Bacillota</taxon>
        <taxon>Bacilli</taxon>
        <taxon>Bacillales</taxon>
        <taxon>Bacillaceae</taxon>
        <taxon>Bacillus</taxon>
    </lineage>
</organism>
<proteinExistence type="predicted"/>
<reference key="1">
    <citation type="journal article" date="1997" name="Nature">
        <title>The complete genome sequence of the Gram-positive bacterium Bacillus subtilis.</title>
        <authorList>
            <person name="Kunst F."/>
            <person name="Ogasawara N."/>
            <person name="Moszer I."/>
            <person name="Albertini A.M."/>
            <person name="Alloni G."/>
            <person name="Azevedo V."/>
            <person name="Bertero M.G."/>
            <person name="Bessieres P."/>
            <person name="Bolotin A."/>
            <person name="Borchert S."/>
            <person name="Borriss R."/>
            <person name="Boursier L."/>
            <person name="Brans A."/>
            <person name="Braun M."/>
            <person name="Brignell S.C."/>
            <person name="Bron S."/>
            <person name="Brouillet S."/>
            <person name="Bruschi C.V."/>
            <person name="Caldwell B."/>
            <person name="Capuano V."/>
            <person name="Carter N.M."/>
            <person name="Choi S.-K."/>
            <person name="Codani J.-J."/>
            <person name="Connerton I.F."/>
            <person name="Cummings N.J."/>
            <person name="Daniel R.A."/>
            <person name="Denizot F."/>
            <person name="Devine K.M."/>
            <person name="Duesterhoeft A."/>
            <person name="Ehrlich S.D."/>
            <person name="Emmerson P.T."/>
            <person name="Entian K.-D."/>
            <person name="Errington J."/>
            <person name="Fabret C."/>
            <person name="Ferrari E."/>
            <person name="Foulger D."/>
            <person name="Fritz C."/>
            <person name="Fujita M."/>
            <person name="Fujita Y."/>
            <person name="Fuma S."/>
            <person name="Galizzi A."/>
            <person name="Galleron N."/>
            <person name="Ghim S.-Y."/>
            <person name="Glaser P."/>
            <person name="Goffeau A."/>
            <person name="Golightly E.J."/>
            <person name="Grandi G."/>
            <person name="Guiseppi G."/>
            <person name="Guy B.J."/>
            <person name="Haga K."/>
            <person name="Haiech J."/>
            <person name="Harwood C.R."/>
            <person name="Henaut A."/>
            <person name="Hilbert H."/>
            <person name="Holsappel S."/>
            <person name="Hosono S."/>
            <person name="Hullo M.-F."/>
            <person name="Itaya M."/>
            <person name="Jones L.-M."/>
            <person name="Joris B."/>
            <person name="Karamata D."/>
            <person name="Kasahara Y."/>
            <person name="Klaerr-Blanchard M."/>
            <person name="Klein C."/>
            <person name="Kobayashi Y."/>
            <person name="Koetter P."/>
            <person name="Koningstein G."/>
            <person name="Krogh S."/>
            <person name="Kumano M."/>
            <person name="Kurita K."/>
            <person name="Lapidus A."/>
            <person name="Lardinois S."/>
            <person name="Lauber J."/>
            <person name="Lazarevic V."/>
            <person name="Lee S.-M."/>
            <person name="Levine A."/>
            <person name="Liu H."/>
            <person name="Masuda S."/>
            <person name="Mauel C."/>
            <person name="Medigue C."/>
            <person name="Medina N."/>
            <person name="Mellado R.P."/>
            <person name="Mizuno M."/>
            <person name="Moestl D."/>
            <person name="Nakai S."/>
            <person name="Noback M."/>
            <person name="Noone D."/>
            <person name="O'Reilly M."/>
            <person name="Ogawa K."/>
            <person name="Ogiwara A."/>
            <person name="Oudega B."/>
            <person name="Park S.-H."/>
            <person name="Parro V."/>
            <person name="Pohl T.M."/>
            <person name="Portetelle D."/>
            <person name="Porwollik S."/>
            <person name="Prescott A.M."/>
            <person name="Presecan E."/>
            <person name="Pujic P."/>
            <person name="Purnelle B."/>
            <person name="Rapoport G."/>
            <person name="Rey M."/>
            <person name="Reynolds S."/>
            <person name="Rieger M."/>
            <person name="Rivolta C."/>
            <person name="Rocha E."/>
            <person name="Roche B."/>
            <person name="Rose M."/>
            <person name="Sadaie Y."/>
            <person name="Sato T."/>
            <person name="Scanlan E."/>
            <person name="Schleich S."/>
            <person name="Schroeter R."/>
            <person name="Scoffone F."/>
            <person name="Sekiguchi J."/>
            <person name="Sekowska A."/>
            <person name="Seror S.J."/>
            <person name="Serror P."/>
            <person name="Shin B.-S."/>
            <person name="Soldo B."/>
            <person name="Sorokin A."/>
            <person name="Tacconi E."/>
            <person name="Takagi T."/>
            <person name="Takahashi H."/>
            <person name="Takemaru K."/>
            <person name="Takeuchi M."/>
            <person name="Tamakoshi A."/>
            <person name="Tanaka T."/>
            <person name="Terpstra P."/>
            <person name="Tognoni A."/>
            <person name="Tosato V."/>
            <person name="Uchiyama S."/>
            <person name="Vandenbol M."/>
            <person name="Vannier F."/>
            <person name="Vassarotti A."/>
            <person name="Viari A."/>
            <person name="Wambutt R."/>
            <person name="Wedler E."/>
            <person name="Wedler H."/>
            <person name="Weitzenegger T."/>
            <person name="Winters P."/>
            <person name="Wipat A."/>
            <person name="Yamamoto H."/>
            <person name="Yamane K."/>
            <person name="Yasumoto K."/>
            <person name="Yata K."/>
            <person name="Yoshida K."/>
            <person name="Yoshikawa H.-F."/>
            <person name="Zumstein E."/>
            <person name="Yoshikawa H."/>
            <person name="Danchin A."/>
        </authorList>
    </citation>
    <scope>NUCLEOTIDE SEQUENCE [LARGE SCALE GENOMIC DNA]</scope>
    <source>
        <strain>168</strain>
    </source>
</reference>
<sequence>MSVEQTYSWLRKAGSIDDLAHYIIPLFSGAEKKNWKGILGHLQHHGMFKNIKEGIQTVSKLKEKGFYGHIQKEEQYLKNKWQGPDVPIVTLPVDERNRRIRLEFGSKSGLAFQDKMFLFLSSDLDFGSVSALMTHEYHHVCRLGHLTKEEKDVTLLDTIIMEGLAEYAVYERFGRSQTAEWTTWYTPEQLQALYEKKIAPHRDIKRDNRLFPQLLFGKGYQPKMLGYAVGFNIVKKYLTASKASTADGLSIPAETFLDAML</sequence>
<protein>
    <recommendedName>
        <fullName>Uncharacterized protein YjaZ</fullName>
    </recommendedName>
</protein>
<dbReference type="EMBL" id="AL009126">
    <property type="protein sequence ID" value="CAB12992.1"/>
    <property type="molecule type" value="Genomic_DNA"/>
</dbReference>
<dbReference type="PIR" id="H69842">
    <property type="entry name" value="H69842"/>
</dbReference>
<dbReference type="RefSeq" id="NP_389017.1">
    <property type="nucleotide sequence ID" value="NC_000964.3"/>
</dbReference>
<dbReference type="RefSeq" id="WP_003232967.1">
    <property type="nucleotide sequence ID" value="NZ_OZ025638.1"/>
</dbReference>
<dbReference type="FunCoup" id="O31596">
    <property type="interactions" value="211"/>
</dbReference>
<dbReference type="STRING" id="224308.BSU11350"/>
<dbReference type="PaxDb" id="224308-BSU11350"/>
<dbReference type="EnsemblBacteria" id="CAB12992">
    <property type="protein sequence ID" value="CAB12992"/>
    <property type="gene ID" value="BSU_11350"/>
</dbReference>
<dbReference type="GeneID" id="939806"/>
<dbReference type="KEGG" id="bsu:BSU11350"/>
<dbReference type="PATRIC" id="fig|224308.179.peg.1220"/>
<dbReference type="eggNOG" id="COG5504">
    <property type="taxonomic scope" value="Bacteria"/>
</dbReference>
<dbReference type="InParanoid" id="O31596"/>
<dbReference type="OrthoDB" id="2449457at2"/>
<dbReference type="BioCyc" id="BSUB:BSU11350-MONOMER"/>
<dbReference type="Proteomes" id="UP000001570">
    <property type="component" value="Chromosome"/>
</dbReference>
<dbReference type="InterPro" id="IPR018728">
    <property type="entry name" value="DUF2268"/>
</dbReference>
<dbReference type="Pfam" id="PF10026">
    <property type="entry name" value="DUF2268"/>
    <property type="match status" value="1"/>
</dbReference>